<feature type="chain" id="PRO_0000194125" description="DNA helicase MCM8">
    <location>
        <begin position="1"/>
        <end position="840"/>
    </location>
</feature>
<feature type="domain" description="MCM">
    <location>
        <begin position="402"/>
        <end position="609"/>
    </location>
</feature>
<feature type="region of interest" description="Disordered" evidence="3">
    <location>
        <begin position="16"/>
        <end position="54"/>
    </location>
</feature>
<feature type="compositionally biased region" description="Basic and acidic residues" evidence="3">
    <location>
        <begin position="30"/>
        <end position="40"/>
    </location>
</feature>
<feature type="binding site" evidence="2">
    <location>
        <begin position="454"/>
        <end position="461"/>
    </location>
    <ligand>
        <name>ATP</name>
        <dbReference type="ChEBI" id="CHEBI:30616"/>
    </ligand>
</feature>
<feature type="modified residue" description="Phosphoserine" evidence="19">
    <location>
        <position position="630"/>
    </location>
</feature>
<feature type="splice variant" id="VSP_041308" description="In isoform 3." evidence="15">
    <location>
        <begin position="342"/>
        <end position="357"/>
    </location>
</feature>
<feature type="splice variant" id="VSP_044179" description="In isoform 4." evidence="14">
    <original>NSLCPVIFGHE</original>
    <variation>KWSLALSPRLEYSGAISAHCNLHLPSSNSSPTSACRVAGTTGMRHQTQLLL</variation>
    <location>
        <begin position="408"/>
        <end position="418"/>
    </location>
</feature>
<feature type="splice variant" id="VSP_015785" description="In isoform 2." evidence="14">
    <location>
        <begin position="419"/>
        <end position="465"/>
    </location>
</feature>
<feature type="sequence variant" id="VAR_015145" description="In dbSNP:rs236110.">
    <original>Q</original>
    <variation>K</variation>
    <location>
        <position position="63"/>
    </location>
</feature>
<feature type="sequence variant" id="VAR_050281" description="In dbSNP:rs6117014.">
    <original>K</original>
    <variation>N</variation>
    <location>
        <position position="101"/>
    </location>
</feature>
<feature type="sequence variant" id="VAR_073417" description="In POF10; inhibits protein recruitment to sites of DNA damage; shows significant reduction in DNA-binding affinity for single-strand DNA; dbSNP:rs606231343." evidence="10">
    <original>P</original>
    <variation>R</variation>
    <location>
        <position position="149"/>
    </location>
</feature>
<feature type="sequence variant" id="VAR_050282" description="In dbSNP:rs16991591.">
    <original>N</original>
    <variation>S</variation>
    <location>
        <position position="183"/>
    </location>
</feature>
<feature type="sequence variant" id="VAR_050283" description="Decreases the formation of MRE11 and RPA1 foci in response to cisplatin-induced DNA damage; dbSNP:rs16991615." evidence="11">
    <original>E</original>
    <variation>K</variation>
    <location>
        <position position="341"/>
    </location>
</feature>
<feature type="sequence variant" id="VAR_050284" description="In dbSNP:rs28403619.">
    <original>S</original>
    <variation>N</variation>
    <location>
        <position position="365"/>
    </location>
</feature>
<feature type="sequence variant" id="VAR_050285" description="In dbSNP:rs16991638.">
    <original>N</original>
    <variation>S</variation>
    <location>
        <position position="785"/>
    </location>
</feature>
<feature type="mutagenesis site" description="Decreases the formation of MRE11 and RPA1 foci in response to cisplatin-induced DNA damage." evidence="11">
    <original>P</original>
    <variation>A</variation>
    <location>
        <position position="456"/>
    </location>
</feature>
<feature type="sequence conflict" description="In Ref. 6; AAI01056." evidence="15" ref="6">
    <original>V</original>
    <variation>A</variation>
    <location>
        <position position="590"/>
    </location>
</feature>
<feature type="sequence conflict" description="In Ref. 6; AAI01055." evidence="15" ref="6">
    <original>E</original>
    <variation>G</variation>
    <location>
        <position position="788"/>
    </location>
</feature>
<feature type="helix" evidence="21">
    <location>
        <begin position="78"/>
        <end position="80"/>
    </location>
</feature>
<feature type="helix" evidence="21">
    <location>
        <begin position="92"/>
        <end position="105"/>
    </location>
</feature>
<feature type="helix" evidence="21">
    <location>
        <begin position="107"/>
        <end position="109"/>
    </location>
</feature>
<feature type="helix" evidence="21">
    <location>
        <begin position="112"/>
        <end position="118"/>
    </location>
</feature>
<feature type="strand" evidence="21">
    <location>
        <begin position="120"/>
        <end position="124"/>
    </location>
</feature>
<feature type="helix" evidence="21">
    <location>
        <begin position="125"/>
        <end position="128"/>
    </location>
</feature>
<feature type="turn" evidence="21">
    <location>
        <begin position="134"/>
        <end position="137"/>
    </location>
</feature>
<feature type="helix" evidence="21">
    <location>
        <begin position="141"/>
        <end position="147"/>
    </location>
</feature>
<feature type="helix" evidence="21">
    <location>
        <begin position="149"/>
        <end position="177"/>
    </location>
</feature>
<feature type="strand" evidence="21">
    <location>
        <begin position="195"/>
        <end position="200"/>
    </location>
</feature>
<feature type="strand" evidence="21">
    <location>
        <begin position="202"/>
        <end position="204"/>
    </location>
</feature>
<feature type="helix" evidence="21">
    <location>
        <begin position="207"/>
        <end position="209"/>
    </location>
</feature>
<feature type="helix" evidence="21">
    <location>
        <begin position="212"/>
        <end position="214"/>
    </location>
</feature>
<feature type="strand" evidence="21">
    <location>
        <begin position="218"/>
        <end position="228"/>
    </location>
</feature>
<feature type="strand" evidence="21">
    <location>
        <begin position="232"/>
        <end position="235"/>
    </location>
</feature>
<feature type="strand" evidence="21">
    <location>
        <begin position="237"/>
        <end position="242"/>
    </location>
</feature>
<feature type="turn" evidence="21">
    <location>
        <begin position="243"/>
        <end position="245"/>
    </location>
</feature>
<feature type="strand" evidence="21">
    <location>
        <begin position="248"/>
        <end position="252"/>
    </location>
</feature>
<feature type="strand" evidence="21">
    <location>
        <begin position="265"/>
        <end position="268"/>
    </location>
</feature>
<feature type="strand" evidence="21">
    <location>
        <begin position="274"/>
        <end position="277"/>
    </location>
</feature>
<feature type="strand" evidence="21">
    <location>
        <begin position="285"/>
        <end position="295"/>
    </location>
</feature>
<feature type="strand" evidence="21">
    <location>
        <begin position="299"/>
        <end position="302"/>
    </location>
</feature>
<feature type="strand" evidence="21">
    <location>
        <begin position="310"/>
        <end position="316"/>
    </location>
</feature>
<feature type="helix" evidence="21">
    <location>
        <begin position="317"/>
        <end position="319"/>
    </location>
</feature>
<feature type="strand" evidence="21">
    <location>
        <begin position="328"/>
        <end position="337"/>
    </location>
</feature>
<feature type="turn" evidence="21">
    <location>
        <begin position="341"/>
        <end position="344"/>
    </location>
</feature>
<feature type="strand" evidence="21">
    <location>
        <begin position="355"/>
        <end position="364"/>
    </location>
</feature>
<feature type="helix" evidence="20">
    <location>
        <begin position="774"/>
        <end position="790"/>
    </location>
</feature>
<feature type="strand" evidence="20">
    <location>
        <begin position="794"/>
        <end position="796"/>
    </location>
</feature>
<feature type="helix" evidence="20">
    <location>
        <begin position="797"/>
        <end position="806"/>
    </location>
</feature>
<feature type="helix" evidence="20">
    <location>
        <begin position="814"/>
        <end position="823"/>
    </location>
</feature>
<feature type="strand" evidence="20">
    <location>
        <begin position="826"/>
        <end position="831"/>
    </location>
</feature>
<feature type="strand" evidence="20">
    <location>
        <begin position="834"/>
        <end position="837"/>
    </location>
</feature>
<gene>
    <name type="primary">MCM8</name>
    <name type="synonym">C20orf154</name>
</gene>
<name>MCM8_HUMAN</name>
<comment type="function">
    <text evidence="1 6 9 11">Component of the MCM8-MCM9 complex, a complex involved in the repair of double-stranded DNA breaks (DBSs) and DNA interstrand cross-links (ICLs) by homologous recombination (HR) (PubMed:23401855). Required for DNA resection by the MRE11-RAD50-NBN/NBS1 (MRN) complex by recruiting the MRN complex to the repair site and by promoting the complex nuclease activity (PubMed:26215093). Probably by regulating the localization of the MNR complex, indirectly regulates the recruitment of downstream effector RAD51 to DNA damage sites including DBSs and ICLs (PubMed:23401855). The MCM8-MCM9 complex is dispensable for DNA replication and S phase progression (PubMed:23401855). However, may play a non-essential for DNA replication: may be involved in the activation of the prereplicative complex (pre-RC) during G(1) phase by recruiting CDC6 to the origin recognition complex (ORC) (PubMed:15684404). Probably by regulating HR, plays a key role during gametogenesis (By similarity). Stabilizes MCM9 protein (PubMed:23401855, PubMed:26215093).</text>
</comment>
<comment type="catalytic activity">
    <reaction evidence="18">
        <text>ATP + H2O = ADP + phosphate + H(+)</text>
        <dbReference type="Rhea" id="RHEA:13065"/>
        <dbReference type="ChEBI" id="CHEBI:15377"/>
        <dbReference type="ChEBI" id="CHEBI:15378"/>
        <dbReference type="ChEBI" id="CHEBI:30616"/>
        <dbReference type="ChEBI" id="CHEBI:43474"/>
        <dbReference type="ChEBI" id="CHEBI:456216"/>
        <dbReference type="EC" id="3.6.4.12"/>
    </reaction>
</comment>
<comment type="subunit">
    <text evidence="6 9 11 12 13">Component of the MCM8-MCM9 complex, which forms a hexamer composed of MCM8 and MCM9 (PubMed:23401855, PubMed:26300262). Interacts with the DNA mismatch repair (MMR) complex composed at least of MSH2, MSH3, MSH6, PMS1 and MLH1 (PubMed:26300262). Interacts with RAD51; the interaction recruits RAD51 to DNA damage sites (PubMed:23401855). Interacts with the MRN complex composed of MRE11, RAD50 and NBN/NBS1 (PubMed:26215093). Interacts with CDC6 and ORC2 (PubMed:15684404). Interacts with HROB; the interaction recruits the MCM8-MCM9 complex to DNA damage sites (PubMed:31467087).</text>
</comment>
<comment type="interaction">
    <interactant intactId="EBI-8756095">
        <id>Q9UJA3</id>
    </interactant>
    <interactant intactId="EBI-2804985">
        <id>Q9NXL9</id>
        <label>MCM9</label>
    </interactant>
    <organismsDiffer>false</organismsDiffer>
    <experiments>5</experiments>
</comment>
<comment type="interaction">
    <interactant intactId="EBI-8756095">
        <id>Q9UJA3</id>
    </interactant>
    <interactant intactId="EBI-749378">
        <id>Q9BTE3</id>
        <label>MCMBP</label>
    </interactant>
    <organismsDiffer>false</organismsDiffer>
    <experiments>3</experiments>
</comment>
<comment type="interaction">
    <interactant intactId="EBI-8756095">
        <id>Q9UJA3</id>
    </interactant>
    <interactant intactId="EBI-744248">
        <id>P40692</id>
        <label>MLH1</label>
    </interactant>
    <organismsDiffer>false</organismsDiffer>
    <experiments>2</experiments>
</comment>
<comment type="interaction">
    <interactant intactId="EBI-13052514">
        <id>Q9UJA3-4</id>
    </interactant>
    <interactant intactId="EBI-2515330">
        <id>Q96JP0</id>
        <label>FEM1C</label>
    </interactant>
    <organismsDiffer>false</organismsDiffer>
    <experiments>3</experiments>
</comment>
<comment type="subcellular location">
    <subcellularLocation>
        <location evidence="4 8 9 11 12">Nucleus</location>
    </subcellularLocation>
    <subcellularLocation>
        <location evidence="6 9 11">Chromosome</location>
    </subcellularLocation>
    <text evidence="6 9 11">Localizes to nuclear foci (PubMed:26215093). Localizes to double-stranded DNA breaks (PubMed:23401855). Binds chromatin throughout the cell cycle (PubMed:15684404).</text>
</comment>
<comment type="alternative products">
    <event type="alternative splicing"/>
    <isoform>
        <id>Q9UJA3-1</id>
        <name>1</name>
        <sequence type="displayed"/>
    </isoform>
    <isoform>
        <id>Q9UJA3-2</id>
        <name>2</name>
        <sequence type="described" ref="VSP_015785"/>
    </isoform>
    <isoform>
        <id>Q9UJA3-3</id>
        <name>3</name>
        <sequence type="described" ref="VSP_041308"/>
    </isoform>
    <isoform>
        <id>Q9UJA3-4</id>
        <name>4</name>
        <sequence type="described" ref="VSP_044179"/>
    </isoform>
</comment>
<comment type="tissue specificity">
    <text evidence="5">Highest levels in placenta, lung and pancreas. Low levels in skeletal muscle and kidney. Expressed in various tumors with highest levels in colon and lung cancers.</text>
</comment>
<comment type="induction">
    <text evidence="7">By E2F1.</text>
</comment>
<comment type="disease" evidence="10">
    <disease id="DI-04371">
        <name>Premature ovarian failure 10</name>
        <acronym>POF10</acronym>
        <description>An ovarian disorder defined as the cessation of ovarian function under the age of 40 years. It is characterized by oligomenorrhea or amenorrhea, in the presence of elevated levels of serum gonadotropins and low estradiol.</description>
        <dbReference type="MIM" id="612885"/>
    </disease>
    <text>The disease is caused by variants affecting the gene represented in this entry.</text>
</comment>
<comment type="miscellaneous">
    <molecule>Isoform 3</molecule>
    <text>No experimental confirmation available. According to PubMed:12771218, this isoform could be derived from an aberrant mRNA form found in placental choriocarcinoma.</text>
</comment>
<comment type="similarity">
    <text evidence="15">Belongs to the MCM family.</text>
</comment>
<comment type="caution">
    <text evidence="16 17">Was initially thought to play a role in DNA replication (PubMed:15684404). However, it was later shown that it is mainly involved in homologous recombination repair (PubMed:23401855).</text>
</comment>
<comment type="sequence caution" evidence="15">
    <conflict type="erroneous initiation">
        <sequence resource="EMBL-CDS" id="BAB55260"/>
    </conflict>
    <text>Truncated N-terminus.</text>
</comment>
<keyword id="KW-0002">3D-structure</keyword>
<keyword id="KW-0025">Alternative splicing</keyword>
<keyword id="KW-0067">ATP-binding</keyword>
<keyword id="KW-0131">Cell cycle</keyword>
<keyword id="KW-0158">Chromosome</keyword>
<keyword id="KW-0225">Disease variant</keyword>
<keyword id="KW-0227">DNA damage</keyword>
<keyword id="KW-0234">DNA repair</keyword>
<keyword id="KW-0235">DNA replication</keyword>
<keyword id="KW-0238">DNA-binding</keyword>
<keyword id="KW-0347">Helicase</keyword>
<keyword id="KW-0378">Hydrolase</keyword>
<keyword id="KW-0547">Nucleotide-binding</keyword>
<keyword id="KW-0539">Nucleus</keyword>
<keyword id="KW-0597">Phosphoprotein</keyword>
<keyword id="KW-1066">Premature ovarian failure</keyword>
<keyword id="KW-1267">Proteomics identification</keyword>
<keyword id="KW-1185">Reference proteome</keyword>
<sequence>MNGEYRGRGFGRGRFQSWKRGRGGGNFSGKWREREHRPDLSKTTGKRTSEQTPQFLLSTKTPQSMQSTLDRFIPYKGWKLYFSEVYSDSSPLIEKIQAFEKFFTRHIDLYDKDEIERKGSILVDFKELTEGGEVTNLIPDIATELRDAPEKTLACMGLAIHQVLTKDLERHAAELQAQEGLSNDGETMVNVPHIHARVYNYEPLTQLKNVRANYYGKYIALRGTVVRVSNIKPLCTKMAFLCAACGEIQSFPLPDGKYSLPTKCPVPVCRGRSFTALRSSPLTVTMDWQSIKIQELMSDDQREAGRIPRTIECELVHDLVDSCVPGDTVTITGIVKVSNAEEGSRNKNDKCMFLLYIEANSISNSKGQKTKSSEDGCKHGMLMEFSLKDLYAIQEIQAEENLFKLIVNSLCPVIFGHELVKAGLALALFGGSQKYADDKNRIPIRGDPHILVVGDPGLGKSQMLQAACNVAPRGVYVCGNTTTTSGLTVTLSKDSSSGDFALEAGALVLGDQGICGIDEFDKMGNQHQALLEAMEQQSISLAKAGVVCSLPARTSIIAAANPVGGHYNKAKTVSENLKMGSALLSRFDLVFILLDTPNEHHDHLLSEHVIAIRAGKQRTISSATVARMNSQDSNTSVLEVVSEKPLSERLKVVPGETIDPIPHQLLRKYIGYARQYVYPRLSTEAARVLQDFYLELRKQSQRLNSSPITTRQLESLIRLTEARARLELREEATKEDAEDIVEIMKYSMLGTYSDEFGNLDFERSQHGSGMSNRSTAKRFISALNNVAERTYNNIFQFHQLRQIAKELNIQVADFENFIGSLNDQGYLLKKGPKVYQLQTM</sequence>
<dbReference type="EC" id="3.6.4.12" evidence="18"/>
<dbReference type="EMBL" id="AJ439063">
    <property type="protein sequence ID" value="CAD27750.1"/>
    <property type="molecule type" value="mRNA"/>
</dbReference>
<dbReference type="EMBL" id="AY158211">
    <property type="protein sequence ID" value="AAO21222.1"/>
    <property type="molecule type" value="mRNA"/>
</dbReference>
<dbReference type="EMBL" id="AK027644">
    <property type="protein sequence ID" value="BAB55260.1"/>
    <property type="status" value="ALT_INIT"/>
    <property type="molecule type" value="mRNA"/>
</dbReference>
<dbReference type="EMBL" id="AK314654">
    <property type="protein sequence ID" value="BAG37214.1"/>
    <property type="molecule type" value="mRNA"/>
</dbReference>
<dbReference type="EMBL" id="AL035461">
    <property type="status" value="NOT_ANNOTATED_CDS"/>
    <property type="molecule type" value="Genomic_DNA"/>
</dbReference>
<dbReference type="EMBL" id="CH471133">
    <property type="protein sequence ID" value="EAX10403.1"/>
    <property type="molecule type" value="Genomic_DNA"/>
</dbReference>
<dbReference type="EMBL" id="CH471133">
    <property type="protein sequence ID" value="EAX10404.1"/>
    <property type="molecule type" value="Genomic_DNA"/>
</dbReference>
<dbReference type="EMBL" id="BC008830">
    <property type="protein sequence ID" value="AAH08830.2"/>
    <property type="molecule type" value="mRNA"/>
</dbReference>
<dbReference type="EMBL" id="BC080656">
    <property type="protein sequence ID" value="AAH80656.1"/>
    <property type="molecule type" value="mRNA"/>
</dbReference>
<dbReference type="EMBL" id="BC101054">
    <property type="protein sequence ID" value="AAI01055.1"/>
    <property type="molecule type" value="mRNA"/>
</dbReference>
<dbReference type="EMBL" id="BC101055">
    <property type="protein sequence ID" value="AAI01056.1"/>
    <property type="molecule type" value="mRNA"/>
</dbReference>
<dbReference type="EMBL" id="BC101056">
    <property type="protein sequence ID" value="AAI01057.1"/>
    <property type="molecule type" value="mRNA"/>
</dbReference>
<dbReference type="EMBL" id="BC101057">
    <property type="protein sequence ID" value="AAI01058.1"/>
    <property type="molecule type" value="mRNA"/>
</dbReference>
<dbReference type="CCDS" id="CCDS13094.1">
    <molecule id="Q9UJA3-1"/>
</dbReference>
<dbReference type="CCDS" id="CCDS13095.1">
    <molecule id="Q9UJA3-3"/>
</dbReference>
<dbReference type="CCDS" id="CCDS63226.1">
    <molecule id="Q9UJA3-2"/>
</dbReference>
<dbReference type="CCDS" id="CCDS63227.1">
    <molecule id="Q9UJA3-4"/>
</dbReference>
<dbReference type="RefSeq" id="NP_001268449.1">
    <molecule id="Q9UJA3-1"/>
    <property type="nucleotide sequence ID" value="NM_001281520.2"/>
</dbReference>
<dbReference type="RefSeq" id="NP_001268450.1">
    <molecule id="Q9UJA3-4"/>
    <property type="nucleotide sequence ID" value="NM_001281521.2"/>
</dbReference>
<dbReference type="RefSeq" id="NP_001268451.1">
    <molecule id="Q9UJA3-2"/>
    <property type="nucleotide sequence ID" value="NM_001281522.2"/>
</dbReference>
<dbReference type="RefSeq" id="NP_115874.3">
    <molecule id="Q9UJA3-1"/>
    <property type="nucleotide sequence ID" value="NM_032485.5"/>
</dbReference>
<dbReference type="RefSeq" id="NP_877954.1">
    <molecule id="Q9UJA3-3"/>
    <property type="nucleotide sequence ID" value="NM_182802.3"/>
</dbReference>
<dbReference type="RefSeq" id="XP_016883594.1">
    <molecule id="Q9UJA3-4"/>
    <property type="nucleotide sequence ID" value="XM_017028105.2"/>
</dbReference>
<dbReference type="RefSeq" id="XP_047296508.1">
    <molecule id="Q9UJA3-2"/>
    <property type="nucleotide sequence ID" value="XM_047440552.1"/>
</dbReference>
<dbReference type="RefSeq" id="XP_054180111.1">
    <molecule id="Q9UJA3-4"/>
    <property type="nucleotide sequence ID" value="XM_054324136.1"/>
</dbReference>
<dbReference type="RefSeq" id="XP_054180112.1">
    <molecule id="Q9UJA3-2"/>
    <property type="nucleotide sequence ID" value="XM_054324137.1"/>
</dbReference>
<dbReference type="PDB" id="6L0O">
    <property type="method" value="X-ray"/>
    <property type="resolution" value="1.21 A"/>
    <property type="chains" value="A=770-840"/>
</dbReference>
<dbReference type="PDB" id="7DP3">
    <property type="method" value="X-ray"/>
    <property type="resolution" value="2.55 A"/>
    <property type="chains" value="A/B=61-376"/>
</dbReference>
<dbReference type="PDB" id="7WI7">
    <property type="method" value="X-ray"/>
    <property type="resolution" value="6.60 A"/>
    <property type="chains" value="A=61-840"/>
</dbReference>
<dbReference type="PDB" id="7YOX">
    <property type="method" value="EM"/>
    <property type="resolution" value="3.95 A"/>
    <property type="chains" value="A/C/F=61-376"/>
</dbReference>
<dbReference type="PDB" id="8S91">
    <property type="method" value="EM"/>
    <property type="resolution" value="4.30 A"/>
    <property type="chains" value="A/B/C=1-840"/>
</dbReference>
<dbReference type="PDB" id="8S92">
    <property type="method" value="EM"/>
    <property type="resolution" value="4.06 A"/>
    <property type="chains" value="A/B/C=1-840"/>
</dbReference>
<dbReference type="PDB" id="8S94">
    <property type="method" value="EM"/>
    <property type="resolution" value="3.94 A"/>
    <property type="chains" value="A/B/C=1-840"/>
</dbReference>
<dbReference type="PDBsum" id="6L0O"/>
<dbReference type="PDBsum" id="7DP3"/>
<dbReference type="PDBsum" id="7WI7"/>
<dbReference type="PDBsum" id="7YOX"/>
<dbReference type="PDBsum" id="8S91"/>
<dbReference type="PDBsum" id="8S92"/>
<dbReference type="PDBsum" id="8S94"/>
<dbReference type="EMDB" id="EMD-33989"/>
<dbReference type="EMDB" id="EMD-40234"/>
<dbReference type="EMDB" id="EMD-40235"/>
<dbReference type="EMDB" id="EMD-40236"/>
<dbReference type="EMDB" id="EMD-40237"/>
<dbReference type="SMR" id="Q9UJA3"/>
<dbReference type="BioGRID" id="124109">
    <property type="interactions" value="67"/>
</dbReference>
<dbReference type="ComplexPortal" id="CPX-7113">
    <property type="entry name" value="MCM8-MCM9 DNA helicase complex"/>
</dbReference>
<dbReference type="CORUM" id="Q9UJA3"/>
<dbReference type="FunCoup" id="Q9UJA3">
    <property type="interactions" value="1646"/>
</dbReference>
<dbReference type="IntAct" id="Q9UJA3">
    <property type="interactions" value="43"/>
</dbReference>
<dbReference type="MINT" id="Q9UJA3"/>
<dbReference type="STRING" id="9606.ENSP00000368164"/>
<dbReference type="iPTMnet" id="Q9UJA3"/>
<dbReference type="PhosphoSitePlus" id="Q9UJA3"/>
<dbReference type="BioMuta" id="MCM8"/>
<dbReference type="DMDM" id="27805609"/>
<dbReference type="jPOST" id="Q9UJA3"/>
<dbReference type="MassIVE" id="Q9UJA3"/>
<dbReference type="PaxDb" id="9606-ENSP00000368164"/>
<dbReference type="PeptideAtlas" id="Q9UJA3"/>
<dbReference type="ProteomicsDB" id="17650"/>
<dbReference type="ProteomicsDB" id="84610">
    <molecule id="Q9UJA3-1"/>
</dbReference>
<dbReference type="ProteomicsDB" id="84611">
    <molecule id="Q9UJA3-2"/>
</dbReference>
<dbReference type="ProteomicsDB" id="84612">
    <molecule id="Q9UJA3-3"/>
</dbReference>
<dbReference type="Pumba" id="Q9UJA3"/>
<dbReference type="Antibodypedia" id="8265">
    <property type="antibodies" value="263 antibodies from 30 providers"/>
</dbReference>
<dbReference type="DNASU" id="84515"/>
<dbReference type="Ensembl" id="ENST00000265187.4">
    <molecule id="Q9UJA3-3"/>
    <property type="protein sequence ID" value="ENSP00000265187.4"/>
    <property type="gene ID" value="ENSG00000125885.13"/>
</dbReference>
<dbReference type="Ensembl" id="ENST00000378883.5">
    <molecule id="Q9UJA3-2"/>
    <property type="protein sequence ID" value="ENSP00000368161.1"/>
    <property type="gene ID" value="ENSG00000125885.13"/>
</dbReference>
<dbReference type="Ensembl" id="ENST00000378886.6">
    <molecule id="Q9UJA3-4"/>
    <property type="protein sequence ID" value="ENSP00000368164.2"/>
    <property type="gene ID" value="ENSG00000125885.13"/>
</dbReference>
<dbReference type="Ensembl" id="ENST00000378896.7">
    <molecule id="Q9UJA3-1"/>
    <property type="protein sequence ID" value="ENSP00000368174.3"/>
    <property type="gene ID" value="ENSG00000125885.13"/>
</dbReference>
<dbReference type="Ensembl" id="ENST00000610722.4">
    <molecule id="Q9UJA3-1"/>
    <property type="protein sequence ID" value="ENSP00000478141.1"/>
    <property type="gene ID" value="ENSG00000125885.13"/>
</dbReference>
<dbReference type="GeneID" id="84515"/>
<dbReference type="KEGG" id="hsa:84515"/>
<dbReference type="MANE-Select" id="ENST00000610722.4">
    <property type="protein sequence ID" value="ENSP00000478141.1"/>
    <property type="RefSeq nucleotide sequence ID" value="NM_032485.6"/>
    <property type="RefSeq protein sequence ID" value="NP_115874.3"/>
</dbReference>
<dbReference type="UCSC" id="uc002wmi.5">
    <molecule id="Q9UJA3-1"/>
    <property type="organism name" value="human"/>
</dbReference>
<dbReference type="AGR" id="HGNC:16147"/>
<dbReference type="CTD" id="84515"/>
<dbReference type="DisGeNET" id="84515"/>
<dbReference type="GeneCards" id="MCM8"/>
<dbReference type="HGNC" id="HGNC:16147">
    <property type="gene designation" value="MCM8"/>
</dbReference>
<dbReference type="HPA" id="ENSG00000125885">
    <property type="expression patterns" value="Low tissue specificity"/>
</dbReference>
<dbReference type="MalaCards" id="MCM8"/>
<dbReference type="MIM" id="608187">
    <property type="type" value="gene"/>
</dbReference>
<dbReference type="MIM" id="612885">
    <property type="type" value="phenotype"/>
</dbReference>
<dbReference type="neXtProt" id="NX_Q9UJA3"/>
<dbReference type="OpenTargets" id="ENSG00000125885"/>
<dbReference type="PharmGKB" id="PA25696"/>
<dbReference type="VEuPathDB" id="HostDB:ENSG00000125885"/>
<dbReference type="eggNOG" id="KOG0480">
    <property type="taxonomic scope" value="Eukaryota"/>
</dbReference>
<dbReference type="GeneTree" id="ENSGT01110000267230"/>
<dbReference type="HOGENOM" id="CLU_000995_7_2_1"/>
<dbReference type="InParanoid" id="Q9UJA3"/>
<dbReference type="OMA" id="AREYCKP"/>
<dbReference type="OrthoDB" id="422555at2759"/>
<dbReference type="PAN-GO" id="Q9UJA3">
    <property type="GO annotations" value="5 GO annotations based on evolutionary models"/>
</dbReference>
<dbReference type="PhylomeDB" id="Q9UJA3"/>
<dbReference type="TreeFam" id="TF323155"/>
<dbReference type="PathwayCommons" id="Q9UJA3"/>
<dbReference type="Reactome" id="R-HSA-113507">
    <property type="pathway name" value="E2F-enabled inhibition of pre-replication complex formation"/>
</dbReference>
<dbReference type="Reactome" id="R-HSA-176187">
    <property type="pathway name" value="Activation of ATR in response to replication stress"/>
</dbReference>
<dbReference type="Reactome" id="R-HSA-176974">
    <property type="pathway name" value="Unwinding of DNA"/>
</dbReference>
<dbReference type="Reactome" id="R-HSA-68689">
    <property type="pathway name" value="CDC6 association with the ORC:origin complex"/>
</dbReference>
<dbReference type="Reactome" id="R-HSA-68949">
    <property type="pathway name" value="Orc1 removal from chromatin"/>
</dbReference>
<dbReference type="Reactome" id="R-HSA-68962">
    <property type="pathway name" value="Activation of the pre-replicative complex"/>
</dbReference>
<dbReference type="SignaLink" id="Q9UJA3"/>
<dbReference type="BioGRID-ORCS" id="84515">
    <property type="hits" value="23 hits in 1161 CRISPR screens"/>
</dbReference>
<dbReference type="ChiTaRS" id="MCM8">
    <property type="organism name" value="human"/>
</dbReference>
<dbReference type="GeneWiki" id="MCM8"/>
<dbReference type="GenomeRNAi" id="84515"/>
<dbReference type="Pharos" id="Q9UJA3">
    <property type="development level" value="Tbio"/>
</dbReference>
<dbReference type="PRO" id="PR:Q9UJA3"/>
<dbReference type="Proteomes" id="UP000005640">
    <property type="component" value="Chromosome 20"/>
</dbReference>
<dbReference type="RNAct" id="Q9UJA3">
    <property type="molecule type" value="protein"/>
</dbReference>
<dbReference type="Bgee" id="ENSG00000125885">
    <property type="expression patterns" value="Expressed in primordial germ cell in gonad and 173 other cell types or tissues"/>
</dbReference>
<dbReference type="GO" id="GO:0005694">
    <property type="term" value="C:chromosome"/>
    <property type="evidence" value="ECO:0007669"/>
    <property type="project" value="UniProtKB-SubCell"/>
</dbReference>
<dbReference type="GO" id="GO:0042555">
    <property type="term" value="C:MCM complex"/>
    <property type="evidence" value="ECO:0000318"/>
    <property type="project" value="GO_Central"/>
</dbReference>
<dbReference type="GO" id="GO:0097362">
    <property type="term" value="C:MCM8-MCM9 complex"/>
    <property type="evidence" value="ECO:0000314"/>
    <property type="project" value="UniProtKB"/>
</dbReference>
<dbReference type="GO" id="GO:0005654">
    <property type="term" value="C:nucleoplasm"/>
    <property type="evidence" value="ECO:0000304"/>
    <property type="project" value="Reactome"/>
</dbReference>
<dbReference type="GO" id="GO:0005634">
    <property type="term" value="C:nucleus"/>
    <property type="evidence" value="ECO:0000314"/>
    <property type="project" value="UniProtKB"/>
</dbReference>
<dbReference type="GO" id="GO:0005524">
    <property type="term" value="F:ATP binding"/>
    <property type="evidence" value="ECO:0007669"/>
    <property type="project" value="UniProtKB-KW"/>
</dbReference>
<dbReference type="GO" id="GO:0016887">
    <property type="term" value="F:ATP hydrolysis activity"/>
    <property type="evidence" value="ECO:0007669"/>
    <property type="project" value="InterPro"/>
</dbReference>
<dbReference type="GO" id="GO:0003682">
    <property type="term" value="F:chromatin binding"/>
    <property type="evidence" value="ECO:0000314"/>
    <property type="project" value="UniProtKB"/>
</dbReference>
<dbReference type="GO" id="GO:0019899">
    <property type="term" value="F:enzyme binding"/>
    <property type="evidence" value="ECO:0000353"/>
    <property type="project" value="UniProtKB"/>
</dbReference>
<dbReference type="GO" id="GO:0004386">
    <property type="term" value="F:helicase activity"/>
    <property type="evidence" value="ECO:0007669"/>
    <property type="project" value="UniProtKB-KW"/>
</dbReference>
<dbReference type="GO" id="GO:0032406">
    <property type="term" value="F:MutLbeta complex binding"/>
    <property type="evidence" value="ECO:0000314"/>
    <property type="project" value="UniProtKB"/>
</dbReference>
<dbReference type="GO" id="GO:0032407">
    <property type="term" value="F:MutSalpha complex binding"/>
    <property type="evidence" value="ECO:0000314"/>
    <property type="project" value="UniProtKB"/>
</dbReference>
<dbReference type="GO" id="GO:0032408">
    <property type="term" value="F:MutSbeta complex binding"/>
    <property type="evidence" value="ECO:0000314"/>
    <property type="project" value="UniProtKB"/>
</dbReference>
<dbReference type="GO" id="GO:0003697">
    <property type="term" value="F:single-stranded DNA binding"/>
    <property type="evidence" value="ECO:0000318"/>
    <property type="project" value="GO_Central"/>
</dbReference>
<dbReference type="GO" id="GO:0006974">
    <property type="term" value="P:DNA damage response"/>
    <property type="evidence" value="ECO:0000314"/>
    <property type="project" value="UniProtKB"/>
</dbReference>
<dbReference type="GO" id="GO:0000724">
    <property type="term" value="P:double-strand break repair via homologous recombination"/>
    <property type="evidence" value="ECO:0000315"/>
    <property type="project" value="UniProtKB"/>
</dbReference>
<dbReference type="GO" id="GO:0007292">
    <property type="term" value="P:female gamete generation"/>
    <property type="evidence" value="ECO:0000250"/>
    <property type="project" value="UniProtKB"/>
</dbReference>
<dbReference type="GO" id="GO:0048232">
    <property type="term" value="P:male gamete generation"/>
    <property type="evidence" value="ECO:0000250"/>
    <property type="project" value="UniProtKB"/>
</dbReference>
<dbReference type="GO" id="GO:0070716">
    <property type="term" value="P:mismatch repair involved in maintenance of fidelity involved in DNA-dependent DNA replication"/>
    <property type="evidence" value="ECO:0000303"/>
    <property type="project" value="ComplexPortal"/>
</dbReference>
<dbReference type="GO" id="GO:0071168">
    <property type="term" value="P:protein localization to chromatin"/>
    <property type="evidence" value="ECO:0000315"/>
    <property type="project" value="UniProtKB"/>
</dbReference>
<dbReference type="GO" id="GO:0050821">
    <property type="term" value="P:protein stabilization"/>
    <property type="evidence" value="ECO:0000315"/>
    <property type="project" value="UniProtKB"/>
</dbReference>
<dbReference type="GO" id="GO:0036298">
    <property type="term" value="P:recombinational interstrand cross-link repair"/>
    <property type="evidence" value="ECO:0000315"/>
    <property type="project" value="UniProtKB"/>
</dbReference>
<dbReference type="CDD" id="cd17759">
    <property type="entry name" value="MCM8"/>
    <property type="match status" value="1"/>
</dbReference>
<dbReference type="CDD" id="cd22247">
    <property type="entry name" value="MCM8_WHD"/>
    <property type="match status" value="1"/>
</dbReference>
<dbReference type="FunFam" id="2.20.28.10:FF:000007">
    <property type="entry name" value="DNA helicase MCM8 isoform X1"/>
    <property type="match status" value="1"/>
</dbReference>
<dbReference type="FunFam" id="2.40.50.140:FF:000487">
    <property type="entry name" value="Minichromosome maintenance 8 homologous recombination repair factor"/>
    <property type="match status" value="1"/>
</dbReference>
<dbReference type="Gene3D" id="2.20.28.10">
    <property type="match status" value="1"/>
</dbReference>
<dbReference type="Gene3D" id="2.40.50.140">
    <property type="entry name" value="Nucleic acid-binding proteins"/>
    <property type="match status" value="1"/>
</dbReference>
<dbReference type="Gene3D" id="3.40.50.300">
    <property type="entry name" value="P-loop containing nucleotide triphosphate hydrolases"/>
    <property type="match status" value="1"/>
</dbReference>
<dbReference type="InterPro" id="IPR003593">
    <property type="entry name" value="AAA+_ATPase"/>
</dbReference>
<dbReference type="InterPro" id="IPR031327">
    <property type="entry name" value="MCM"/>
</dbReference>
<dbReference type="InterPro" id="IPR056875">
    <property type="entry name" value="MCM8/REC_WHD"/>
</dbReference>
<dbReference type="InterPro" id="IPR001208">
    <property type="entry name" value="MCM_dom"/>
</dbReference>
<dbReference type="InterPro" id="IPR041562">
    <property type="entry name" value="MCM_lid"/>
</dbReference>
<dbReference type="InterPro" id="IPR033762">
    <property type="entry name" value="MCM_OB"/>
</dbReference>
<dbReference type="InterPro" id="IPR012340">
    <property type="entry name" value="NA-bd_OB-fold"/>
</dbReference>
<dbReference type="InterPro" id="IPR027417">
    <property type="entry name" value="P-loop_NTPase"/>
</dbReference>
<dbReference type="PANTHER" id="PTHR11630:SF47">
    <property type="entry name" value="DNA HELICASE MCM8"/>
    <property type="match status" value="1"/>
</dbReference>
<dbReference type="PANTHER" id="PTHR11630">
    <property type="entry name" value="DNA REPLICATION LICENSING FACTOR MCM FAMILY MEMBER"/>
    <property type="match status" value="1"/>
</dbReference>
<dbReference type="Pfam" id="PF00493">
    <property type="entry name" value="MCM"/>
    <property type="match status" value="1"/>
</dbReference>
<dbReference type="Pfam" id="PF17855">
    <property type="entry name" value="MCM_lid"/>
    <property type="match status" value="1"/>
</dbReference>
<dbReference type="Pfam" id="PF17207">
    <property type="entry name" value="MCM_OB"/>
    <property type="match status" value="1"/>
</dbReference>
<dbReference type="Pfam" id="PF25051">
    <property type="entry name" value="WHD_MCM8"/>
    <property type="match status" value="1"/>
</dbReference>
<dbReference type="PRINTS" id="PR01657">
    <property type="entry name" value="MCMFAMILY"/>
</dbReference>
<dbReference type="SMART" id="SM00382">
    <property type="entry name" value="AAA"/>
    <property type="match status" value="1"/>
</dbReference>
<dbReference type="SMART" id="SM00350">
    <property type="entry name" value="MCM"/>
    <property type="match status" value="1"/>
</dbReference>
<dbReference type="SUPFAM" id="SSF50249">
    <property type="entry name" value="Nucleic acid-binding proteins"/>
    <property type="match status" value="1"/>
</dbReference>
<dbReference type="SUPFAM" id="SSF52540">
    <property type="entry name" value="P-loop containing nucleoside triphosphate hydrolases"/>
    <property type="match status" value="1"/>
</dbReference>
<dbReference type="PROSITE" id="PS50051">
    <property type="entry name" value="MCM_2"/>
    <property type="match status" value="1"/>
</dbReference>
<accession>Q9UJA3</accession>
<accession>B2RBG7</accession>
<accession>D3DW08</accession>
<accession>E7EQU7</accession>
<accession>Q495R4</accession>
<accession>Q495R6</accession>
<accession>Q495R7</accession>
<accession>Q86US4</accession>
<accession>Q969I5</accession>
<evidence type="ECO:0000250" key="1">
    <source>
        <dbReference type="UniProtKB" id="Q9CWV1"/>
    </source>
</evidence>
<evidence type="ECO:0000255" key="2"/>
<evidence type="ECO:0000256" key="3">
    <source>
        <dbReference type="SAM" id="MobiDB-lite"/>
    </source>
</evidence>
<evidence type="ECO:0000269" key="4">
    <source>
    </source>
</evidence>
<evidence type="ECO:0000269" key="5">
    <source>
    </source>
</evidence>
<evidence type="ECO:0000269" key="6">
    <source>
    </source>
</evidence>
<evidence type="ECO:0000269" key="7">
    <source>
    </source>
</evidence>
<evidence type="ECO:0000269" key="8">
    <source>
    </source>
</evidence>
<evidence type="ECO:0000269" key="9">
    <source>
    </source>
</evidence>
<evidence type="ECO:0000269" key="10">
    <source>
    </source>
</evidence>
<evidence type="ECO:0000269" key="11">
    <source>
    </source>
</evidence>
<evidence type="ECO:0000269" key="12">
    <source>
    </source>
</evidence>
<evidence type="ECO:0000269" key="13">
    <source>
    </source>
</evidence>
<evidence type="ECO:0000303" key="14">
    <source>
    </source>
</evidence>
<evidence type="ECO:0000305" key="15"/>
<evidence type="ECO:0000305" key="16">
    <source>
    </source>
</evidence>
<evidence type="ECO:0000305" key="17">
    <source>
    </source>
</evidence>
<evidence type="ECO:0000305" key="18">
    <source>
    </source>
</evidence>
<evidence type="ECO:0007744" key="19">
    <source>
    </source>
</evidence>
<evidence type="ECO:0007829" key="20">
    <source>
        <dbReference type="PDB" id="6L0O"/>
    </source>
</evidence>
<evidence type="ECO:0007829" key="21">
    <source>
        <dbReference type="PDB" id="7DP3"/>
    </source>
</evidence>
<reference key="1">
    <citation type="journal article" date="2003" name="Nucleic Acids Res.">
        <title>Identification and functional characterization of a new member of the human Mcm protein family: hMcm8.</title>
        <authorList>
            <person name="Gozuacik D."/>
            <person name="Chami M."/>
            <person name="Lagorce D."/>
            <person name="Faivre J."/>
            <person name="Murakami Y."/>
            <person name="Poch O."/>
            <person name="Biermann E."/>
            <person name="Knippers R."/>
            <person name="Brechot C."/>
            <person name="Paterlini-Brechot P."/>
        </authorList>
    </citation>
    <scope>NUCLEOTIDE SEQUENCE [MRNA] (ISOFORM 1)</scope>
    <scope>POSSIBLE FUNCTION</scope>
    <scope>SUBCELLULAR LOCATION</scope>
    <source>
        <tissue>Liver</tissue>
    </source>
</reference>
<reference key="2">
    <citation type="journal article" date="2003" name="Nucleic Acids Res.">
        <title>A new member of the MCM protein family encoded by the human MCM8 gene, located contrapodal to GCD10 at chromosome band 20p12.3-13.</title>
        <authorList>
            <person name="Johnson E.M."/>
            <person name="Kinoshita Y."/>
            <person name="Daniel D.C."/>
        </authorList>
    </citation>
    <scope>NUCLEOTIDE SEQUENCE [MRNA] (ISOFORM 1)</scope>
    <scope>ALTERNATIVE SPLICING (ISOFORM 3)</scope>
    <scope>TISSUE SPECIFICITY</scope>
    <source>
        <tissue>Cervix carcinoma</tissue>
        <tissue>Choriocarcinoma</tissue>
    </source>
</reference>
<reference key="3">
    <citation type="journal article" date="2004" name="Nat. Genet.">
        <title>Complete sequencing and characterization of 21,243 full-length human cDNAs.</title>
        <authorList>
            <person name="Ota T."/>
            <person name="Suzuki Y."/>
            <person name="Nishikawa T."/>
            <person name="Otsuki T."/>
            <person name="Sugiyama T."/>
            <person name="Irie R."/>
            <person name="Wakamatsu A."/>
            <person name="Hayashi K."/>
            <person name="Sato H."/>
            <person name="Nagai K."/>
            <person name="Kimura K."/>
            <person name="Makita H."/>
            <person name="Sekine M."/>
            <person name="Obayashi M."/>
            <person name="Nishi T."/>
            <person name="Shibahara T."/>
            <person name="Tanaka T."/>
            <person name="Ishii S."/>
            <person name="Yamamoto J."/>
            <person name="Saito K."/>
            <person name="Kawai Y."/>
            <person name="Isono Y."/>
            <person name="Nakamura Y."/>
            <person name="Nagahari K."/>
            <person name="Murakami K."/>
            <person name="Yasuda T."/>
            <person name="Iwayanagi T."/>
            <person name="Wagatsuma M."/>
            <person name="Shiratori A."/>
            <person name="Sudo H."/>
            <person name="Hosoiri T."/>
            <person name="Kaku Y."/>
            <person name="Kodaira H."/>
            <person name="Kondo H."/>
            <person name="Sugawara M."/>
            <person name="Takahashi M."/>
            <person name="Kanda K."/>
            <person name="Yokoi T."/>
            <person name="Furuya T."/>
            <person name="Kikkawa E."/>
            <person name="Omura Y."/>
            <person name="Abe K."/>
            <person name="Kamihara K."/>
            <person name="Katsuta N."/>
            <person name="Sato K."/>
            <person name="Tanikawa M."/>
            <person name="Yamazaki M."/>
            <person name="Ninomiya K."/>
            <person name="Ishibashi T."/>
            <person name="Yamashita H."/>
            <person name="Murakawa K."/>
            <person name="Fujimori K."/>
            <person name="Tanai H."/>
            <person name="Kimata M."/>
            <person name="Watanabe M."/>
            <person name="Hiraoka S."/>
            <person name="Chiba Y."/>
            <person name="Ishida S."/>
            <person name="Ono Y."/>
            <person name="Takiguchi S."/>
            <person name="Watanabe S."/>
            <person name="Yosida M."/>
            <person name="Hotuta T."/>
            <person name="Kusano J."/>
            <person name="Kanehori K."/>
            <person name="Takahashi-Fujii A."/>
            <person name="Hara H."/>
            <person name="Tanase T.-O."/>
            <person name="Nomura Y."/>
            <person name="Togiya S."/>
            <person name="Komai F."/>
            <person name="Hara R."/>
            <person name="Takeuchi K."/>
            <person name="Arita M."/>
            <person name="Imose N."/>
            <person name="Musashino K."/>
            <person name="Yuuki H."/>
            <person name="Oshima A."/>
            <person name="Sasaki N."/>
            <person name="Aotsuka S."/>
            <person name="Yoshikawa Y."/>
            <person name="Matsunawa H."/>
            <person name="Ichihara T."/>
            <person name="Shiohata N."/>
            <person name="Sano S."/>
            <person name="Moriya S."/>
            <person name="Momiyama H."/>
            <person name="Satoh N."/>
            <person name="Takami S."/>
            <person name="Terashima Y."/>
            <person name="Suzuki O."/>
            <person name="Nakagawa S."/>
            <person name="Senoh A."/>
            <person name="Mizoguchi H."/>
            <person name="Goto Y."/>
            <person name="Shimizu F."/>
            <person name="Wakebe H."/>
            <person name="Hishigaki H."/>
            <person name="Watanabe T."/>
            <person name="Sugiyama A."/>
            <person name="Takemoto M."/>
            <person name="Kawakami B."/>
            <person name="Yamazaki M."/>
            <person name="Watanabe K."/>
            <person name="Kumagai A."/>
            <person name="Itakura S."/>
            <person name="Fukuzumi Y."/>
            <person name="Fujimori Y."/>
            <person name="Komiyama M."/>
            <person name="Tashiro H."/>
            <person name="Tanigami A."/>
            <person name="Fujiwara T."/>
            <person name="Ono T."/>
            <person name="Yamada K."/>
            <person name="Fujii Y."/>
            <person name="Ozaki K."/>
            <person name="Hirao M."/>
            <person name="Ohmori Y."/>
            <person name="Kawabata A."/>
            <person name="Hikiji T."/>
            <person name="Kobatake N."/>
            <person name="Inagaki H."/>
            <person name="Ikema Y."/>
            <person name="Okamoto S."/>
            <person name="Okitani R."/>
            <person name="Kawakami T."/>
            <person name="Noguchi S."/>
            <person name="Itoh T."/>
            <person name="Shigeta K."/>
            <person name="Senba T."/>
            <person name="Matsumura K."/>
            <person name="Nakajima Y."/>
            <person name="Mizuno T."/>
            <person name="Morinaga M."/>
            <person name="Sasaki M."/>
            <person name="Togashi T."/>
            <person name="Oyama M."/>
            <person name="Hata H."/>
            <person name="Watanabe M."/>
            <person name="Komatsu T."/>
            <person name="Mizushima-Sugano J."/>
            <person name="Satoh T."/>
            <person name="Shirai Y."/>
            <person name="Takahashi Y."/>
            <person name="Nakagawa K."/>
            <person name="Okumura K."/>
            <person name="Nagase T."/>
            <person name="Nomura N."/>
            <person name="Kikuchi H."/>
            <person name="Masuho Y."/>
            <person name="Yamashita R."/>
            <person name="Nakai K."/>
            <person name="Yada T."/>
            <person name="Nakamura Y."/>
            <person name="Ohara O."/>
            <person name="Isogai T."/>
            <person name="Sugano S."/>
        </authorList>
    </citation>
    <scope>NUCLEOTIDE SEQUENCE [LARGE SCALE MRNA] (ISOFORM 1)</scope>
    <source>
        <tissue>Neuron</tissue>
        <tissue>Testis</tissue>
    </source>
</reference>
<reference key="4">
    <citation type="journal article" date="2001" name="Nature">
        <title>The DNA sequence and comparative analysis of human chromosome 20.</title>
        <authorList>
            <person name="Deloukas P."/>
            <person name="Matthews L.H."/>
            <person name="Ashurst J.L."/>
            <person name="Burton J."/>
            <person name="Gilbert J.G.R."/>
            <person name="Jones M."/>
            <person name="Stavrides G."/>
            <person name="Almeida J.P."/>
            <person name="Babbage A.K."/>
            <person name="Bagguley C.L."/>
            <person name="Bailey J."/>
            <person name="Barlow K.F."/>
            <person name="Bates K.N."/>
            <person name="Beard L.M."/>
            <person name="Beare D.M."/>
            <person name="Beasley O.P."/>
            <person name="Bird C.P."/>
            <person name="Blakey S.E."/>
            <person name="Bridgeman A.M."/>
            <person name="Brown A.J."/>
            <person name="Buck D."/>
            <person name="Burrill W.D."/>
            <person name="Butler A.P."/>
            <person name="Carder C."/>
            <person name="Carter N.P."/>
            <person name="Chapman J.C."/>
            <person name="Clamp M."/>
            <person name="Clark G."/>
            <person name="Clark L.N."/>
            <person name="Clark S.Y."/>
            <person name="Clee C.M."/>
            <person name="Clegg S."/>
            <person name="Cobley V.E."/>
            <person name="Collier R.E."/>
            <person name="Connor R.E."/>
            <person name="Corby N.R."/>
            <person name="Coulson A."/>
            <person name="Coville G.J."/>
            <person name="Deadman R."/>
            <person name="Dhami P.D."/>
            <person name="Dunn M."/>
            <person name="Ellington A.G."/>
            <person name="Frankland J.A."/>
            <person name="Fraser A."/>
            <person name="French L."/>
            <person name="Garner P."/>
            <person name="Grafham D.V."/>
            <person name="Griffiths C."/>
            <person name="Griffiths M.N.D."/>
            <person name="Gwilliam R."/>
            <person name="Hall R.E."/>
            <person name="Hammond S."/>
            <person name="Harley J.L."/>
            <person name="Heath P.D."/>
            <person name="Ho S."/>
            <person name="Holden J.L."/>
            <person name="Howden P.J."/>
            <person name="Huckle E."/>
            <person name="Hunt A.R."/>
            <person name="Hunt S.E."/>
            <person name="Jekosch K."/>
            <person name="Johnson C.M."/>
            <person name="Johnson D."/>
            <person name="Kay M.P."/>
            <person name="Kimberley A.M."/>
            <person name="King A."/>
            <person name="Knights A."/>
            <person name="Laird G.K."/>
            <person name="Lawlor S."/>
            <person name="Lehvaeslaiho M.H."/>
            <person name="Leversha M.A."/>
            <person name="Lloyd C."/>
            <person name="Lloyd D.M."/>
            <person name="Lovell J.D."/>
            <person name="Marsh V.L."/>
            <person name="Martin S.L."/>
            <person name="McConnachie L.J."/>
            <person name="McLay K."/>
            <person name="McMurray A.A."/>
            <person name="Milne S.A."/>
            <person name="Mistry D."/>
            <person name="Moore M.J.F."/>
            <person name="Mullikin J.C."/>
            <person name="Nickerson T."/>
            <person name="Oliver K."/>
            <person name="Parker A."/>
            <person name="Patel R."/>
            <person name="Pearce T.A.V."/>
            <person name="Peck A.I."/>
            <person name="Phillimore B.J.C.T."/>
            <person name="Prathalingam S.R."/>
            <person name="Plumb R.W."/>
            <person name="Ramsay H."/>
            <person name="Rice C.M."/>
            <person name="Ross M.T."/>
            <person name="Scott C.E."/>
            <person name="Sehra H.K."/>
            <person name="Shownkeen R."/>
            <person name="Sims S."/>
            <person name="Skuce C.D."/>
            <person name="Smith M.L."/>
            <person name="Soderlund C."/>
            <person name="Steward C.A."/>
            <person name="Sulston J.E."/>
            <person name="Swann R.M."/>
            <person name="Sycamore N."/>
            <person name="Taylor R."/>
            <person name="Tee L."/>
            <person name="Thomas D.W."/>
            <person name="Thorpe A."/>
            <person name="Tracey A."/>
            <person name="Tromans A.C."/>
            <person name="Vaudin M."/>
            <person name="Wall M."/>
            <person name="Wallis J.M."/>
            <person name="Whitehead S.L."/>
            <person name="Whittaker P."/>
            <person name="Willey D.L."/>
            <person name="Williams L."/>
            <person name="Williams S.A."/>
            <person name="Wilming L."/>
            <person name="Wray P.W."/>
            <person name="Hubbard T."/>
            <person name="Durbin R.M."/>
            <person name="Bentley D.R."/>
            <person name="Beck S."/>
            <person name="Rogers J."/>
        </authorList>
    </citation>
    <scope>NUCLEOTIDE SEQUENCE [LARGE SCALE GENOMIC DNA]</scope>
</reference>
<reference key="5">
    <citation type="submission" date="2005-09" db="EMBL/GenBank/DDBJ databases">
        <authorList>
            <person name="Mural R.J."/>
            <person name="Istrail S."/>
            <person name="Sutton G.G."/>
            <person name="Florea L."/>
            <person name="Halpern A.L."/>
            <person name="Mobarry C.M."/>
            <person name="Lippert R."/>
            <person name="Walenz B."/>
            <person name="Shatkay H."/>
            <person name="Dew I."/>
            <person name="Miller J.R."/>
            <person name="Flanigan M.J."/>
            <person name="Edwards N.J."/>
            <person name="Bolanos R."/>
            <person name="Fasulo D."/>
            <person name="Halldorsson B.V."/>
            <person name="Hannenhalli S."/>
            <person name="Turner R."/>
            <person name="Yooseph S."/>
            <person name="Lu F."/>
            <person name="Nusskern D.R."/>
            <person name="Shue B.C."/>
            <person name="Zheng X.H."/>
            <person name="Zhong F."/>
            <person name="Delcher A.L."/>
            <person name="Huson D.H."/>
            <person name="Kravitz S.A."/>
            <person name="Mouchard L."/>
            <person name="Reinert K."/>
            <person name="Remington K.A."/>
            <person name="Clark A.G."/>
            <person name="Waterman M.S."/>
            <person name="Eichler E.E."/>
            <person name="Adams M.D."/>
            <person name="Hunkapiller M.W."/>
            <person name="Myers E.W."/>
            <person name="Venter J.C."/>
        </authorList>
    </citation>
    <scope>NUCLEOTIDE SEQUENCE [LARGE SCALE GENOMIC DNA]</scope>
</reference>
<reference key="6">
    <citation type="journal article" date="2004" name="Genome Res.">
        <title>The status, quality, and expansion of the NIH full-length cDNA project: the Mammalian Gene Collection (MGC).</title>
        <authorList>
            <consortium name="The MGC Project Team"/>
        </authorList>
    </citation>
    <scope>NUCLEOTIDE SEQUENCE [LARGE SCALE MRNA] (ISOFORMS 1; 2 AND 4)</scope>
    <source>
        <tissue>Muscle</tissue>
        <tissue>Skin</tissue>
    </source>
</reference>
<reference key="7">
    <citation type="journal article" date="2005" name="Mol. Cell. Biol.">
        <title>Involvement of human MCM8 in prereplication complex assembly by recruiting hcdc6 to chromatin.</title>
        <authorList>
            <person name="Volkening M."/>
            <person name="Hoffmann I."/>
        </authorList>
    </citation>
    <scope>FUNCTION</scope>
    <scope>INTERACTION WITH CDC6 AND ORC2</scope>
    <scope>SUBCELLULAR LOCATION</scope>
</reference>
<reference key="8">
    <citation type="journal article" date="2006" name="Gene">
        <title>Comparative genomics on MCM8 orthologous genes reveals the transcriptional regulation by transcription factor E2F.</title>
        <authorList>
            <person name="Hayashi R."/>
            <person name="Goto Y."/>
            <person name="Haga A."/>
            <person name="Kobayashi D."/>
            <person name="Ikeda R."/>
            <person name="Yoshida K."/>
        </authorList>
    </citation>
    <scope>INDUCTION BY E2F1</scope>
</reference>
<reference key="9">
    <citation type="journal article" date="2008" name="Microsc. Res. Tech.">
        <title>Colocalization of MCM8 and MCM7 with proteins involved in distinct aspects of DNA replication.</title>
        <authorList>
            <person name="Kinoshita Y."/>
            <person name="Johnson E.M."/>
            <person name="Gordon R.E."/>
            <person name="Negri-Bell H."/>
            <person name="Evans M.T."/>
            <person name="Coolbaugh J."/>
            <person name="Rosario-Peralta Y."/>
            <person name="Samet J."/>
            <person name="Slusser E."/>
            <person name="Birkenbach M.P."/>
            <person name="Daniel D.C."/>
        </authorList>
    </citation>
    <scope>SUBCELLULAR LOCATION</scope>
</reference>
<reference key="10">
    <citation type="journal article" date="2013" name="Mol. Cell. Biol.">
        <title>The MCM8-MCM9 complex promotes RAD51 recruitment at DNA damage sites to facilitate homologous recombination.</title>
        <authorList>
            <person name="Park J."/>
            <person name="Long D.T."/>
            <person name="Lee K.Y."/>
            <person name="Abbas T."/>
            <person name="Shibata E."/>
            <person name="Negishi M."/>
            <person name="Luo Y."/>
            <person name="Schimenti J.C."/>
            <person name="Gambus A."/>
            <person name="Walter J.C."/>
            <person name="Dutta A."/>
        </authorList>
    </citation>
    <scope>FUNCTION</scope>
    <scope>IDENTIFICATION IN THE MCM8-MCM9 COMPLEX</scope>
    <scope>INTERACTION WITH RAD51</scope>
    <scope>SUBCELLULAR LOCATION</scope>
</reference>
<reference key="11">
    <citation type="journal article" date="2013" name="J. Proteome Res.">
        <title>Toward a comprehensive characterization of a human cancer cell phosphoproteome.</title>
        <authorList>
            <person name="Zhou H."/>
            <person name="Di Palma S."/>
            <person name="Preisinger C."/>
            <person name="Peng M."/>
            <person name="Polat A.N."/>
            <person name="Heck A.J."/>
            <person name="Mohammed S."/>
        </authorList>
    </citation>
    <scope>PHOSPHORYLATION [LARGE SCALE ANALYSIS] AT SER-630</scope>
    <scope>IDENTIFICATION BY MASS SPECTROMETRY [LARGE SCALE ANALYSIS]</scope>
    <source>
        <tissue>Cervix carcinoma</tissue>
        <tissue>Erythroleukemia</tissue>
    </source>
</reference>
<reference key="12">
    <citation type="journal article" date="2015" name="Mol. Cell">
        <title>MCM9 Is Required for Mammalian DNA Mismatch Repair.</title>
        <authorList>
            <person name="Traver S."/>
            <person name="Coulombe P."/>
            <person name="Peiffer I."/>
            <person name="Hutchins J.R."/>
            <person name="Kitzmann M."/>
            <person name="Latreille D."/>
            <person name="Mechali M."/>
        </authorList>
    </citation>
    <scope>FUNCTION</scope>
    <scope>IDENTIFICATION IN THE MCM8-MCM9 COMPLEX</scope>
    <scope>INTERACTION WITH THE MMR COMPLEX</scope>
    <scope>SUBCELLULAR LOCATION</scope>
</reference>
<reference key="13">
    <citation type="journal article" date="2015" name="Nat. Commun.">
        <title>MCM8-9 complex promotes resection of double-strand break ends by MRE11-RAD50-NBS1 complex.</title>
        <authorList>
            <person name="Lee K.Y."/>
            <person name="Im J.S."/>
            <person name="Shibata E."/>
            <person name="Park J."/>
            <person name="Handa N."/>
            <person name="Kowalczykowski S.C."/>
            <person name="Dutta A."/>
        </authorList>
    </citation>
    <scope>FUNCTION</scope>
    <scope>CATALYTIC ACTIVITY</scope>
    <scope>INTERACTION WITH THE MRN COMPLEX</scope>
    <scope>SUBCELLULAR LOCATION</scope>
    <scope>MUTAGENESIS OF PRO-456</scope>
    <scope>CHARACTERIZATION OF VARIANT LYS-341</scope>
</reference>
<reference key="14">
    <citation type="journal article" date="2015" name="J. Clin. Invest.">
        <title>Exome sequencing reveals MCM8 mutation underlies ovarian failure and chromosomal instability.</title>
        <authorList>
            <person name="AlAsiri S."/>
            <person name="Basit S."/>
            <person name="Wood-Trageser M.A."/>
            <person name="Yatsenko S.A."/>
            <person name="Jeffries E.P."/>
            <person name="Surti U."/>
            <person name="Ketterer D.M."/>
            <person name="Afzal S."/>
            <person name="Ramzan K."/>
            <person name="Faiyaz-Ul Haque M."/>
            <person name="Jiang H."/>
            <person name="Trakselis M.A."/>
            <person name="Rajkovic A."/>
        </authorList>
    </citation>
    <scope>INVOLVEMENT IN POF10</scope>
    <scope>VARIANT POF10 ARG-149</scope>
    <scope>CHARACTERIZATION OF VARIANT POF10 ARG-149</scope>
</reference>
<reference key="15">
    <citation type="journal article" date="2019" name="Genes Dev.">
        <title>Control of homologous recombination by the HROB-MCM8-MCM9 pathway.</title>
        <authorList>
            <person name="Hustedt N."/>
            <person name="Saito Y."/>
            <person name="Zimmermann M."/>
            <person name="Alvarez-Quilon A."/>
            <person name="Setiaputra D."/>
            <person name="Adam S."/>
            <person name="McEwan A."/>
            <person name="Yuan J.Y."/>
            <person name="Olivieri M."/>
            <person name="Zhao Y."/>
            <person name="Kanemaki M.T."/>
            <person name="Jurisicova A."/>
            <person name="Durocher D."/>
        </authorList>
    </citation>
    <scope>INTERACTION WITH HROB</scope>
</reference>
<organism>
    <name type="scientific">Homo sapiens</name>
    <name type="common">Human</name>
    <dbReference type="NCBI Taxonomy" id="9606"/>
    <lineage>
        <taxon>Eukaryota</taxon>
        <taxon>Metazoa</taxon>
        <taxon>Chordata</taxon>
        <taxon>Craniata</taxon>
        <taxon>Vertebrata</taxon>
        <taxon>Euteleostomi</taxon>
        <taxon>Mammalia</taxon>
        <taxon>Eutheria</taxon>
        <taxon>Euarchontoglires</taxon>
        <taxon>Primates</taxon>
        <taxon>Haplorrhini</taxon>
        <taxon>Catarrhini</taxon>
        <taxon>Hominidae</taxon>
        <taxon>Homo</taxon>
    </lineage>
</organism>
<proteinExistence type="evidence at protein level"/>
<protein>
    <recommendedName>
        <fullName>DNA helicase MCM8</fullName>
        <ecNumber evidence="18">3.6.4.12</ecNumber>
    </recommendedName>
    <alternativeName>
        <fullName>Minichromosome maintenance 8</fullName>
    </alternativeName>
</protein>